<accession>P80356</accession>
<protein>
    <recommendedName>
        <fullName>Avenin-3</fullName>
    </recommendedName>
    <alternativeName>
        <fullName>Prolamin</fullName>
    </alternativeName>
</protein>
<evidence type="ECO:0000269" key="1">
    <source>
    </source>
</evidence>
<evidence type="ECO:0000305" key="2"/>
<dbReference type="EMBL" id="M38722">
    <property type="protein sequence ID" value="AAA32715.1"/>
    <property type="molecule type" value="mRNA"/>
</dbReference>
<dbReference type="PIR" id="JQ1046">
    <property type="entry name" value="JQ1046"/>
</dbReference>
<dbReference type="EnsemblPlants" id="AVESA.00001b.r3.1Dg0002264.1">
    <property type="protein sequence ID" value="cds.AVESA.00001b.r3.1Dg0002264.1"/>
    <property type="gene ID" value="AVESA.00001b.r3.1Dg0002264"/>
</dbReference>
<dbReference type="Gramene" id="AVESA.00001b.r3.1Dg0002264.1">
    <property type="protein sequence ID" value="cds.AVESA.00001b.r3.1Dg0002264.1"/>
    <property type="gene ID" value="AVESA.00001b.r3.1Dg0002264"/>
</dbReference>
<dbReference type="GO" id="GO:0005773">
    <property type="term" value="C:vacuole"/>
    <property type="evidence" value="ECO:0007669"/>
    <property type="project" value="UniProtKB-SubCell"/>
</dbReference>
<dbReference type="GO" id="GO:0045735">
    <property type="term" value="F:nutrient reservoir activity"/>
    <property type="evidence" value="ECO:0007669"/>
    <property type="project" value="UniProtKB-KW"/>
</dbReference>
<dbReference type="CDD" id="cd00261">
    <property type="entry name" value="AAI_SS"/>
    <property type="match status" value="1"/>
</dbReference>
<dbReference type="Gene3D" id="1.10.110.10">
    <property type="entry name" value="Plant lipid-transfer and hydrophobic proteins"/>
    <property type="match status" value="1"/>
</dbReference>
<dbReference type="InterPro" id="IPR036312">
    <property type="entry name" value="Bifun_inhib/LTP/seed_sf"/>
</dbReference>
<dbReference type="InterPro" id="IPR016140">
    <property type="entry name" value="Bifunc_inhib/LTP/seed_store"/>
</dbReference>
<dbReference type="InterPro" id="IPR001954">
    <property type="entry name" value="Glia_glutenin"/>
</dbReference>
<dbReference type="PANTHER" id="PTHR33454:SF7">
    <property type="entry name" value="ALPHA_BETA-GLIADIN MM1"/>
    <property type="match status" value="1"/>
</dbReference>
<dbReference type="PANTHER" id="PTHR33454">
    <property type="entry name" value="PROLAMIN PPROL 14P"/>
    <property type="match status" value="1"/>
</dbReference>
<dbReference type="Pfam" id="PF13016">
    <property type="entry name" value="Gliadin"/>
    <property type="match status" value="1"/>
</dbReference>
<dbReference type="PRINTS" id="PR00208">
    <property type="entry name" value="GLIADGLUTEN"/>
</dbReference>
<dbReference type="SMART" id="SM00499">
    <property type="entry name" value="AAI"/>
    <property type="match status" value="1"/>
</dbReference>
<dbReference type="SUPFAM" id="SSF47699">
    <property type="entry name" value="Bifunctional inhibitor/lipid-transfer protein/seed storage 2S albumin"/>
    <property type="match status" value="1"/>
</dbReference>
<name>AVE3_AVESA</name>
<sequence length="220" mass="25275">MKTFLIFALLAMAATMATAQFDPSEQYQPYPEQQQPILQQQQMLLQQQQQMLLQQQPLLQVLQQQLNPCRQFLVQQCSPVAVVPFLRSQILQQSSCQVMRQQCCRQLEQIPEQLRCPAIHSVVQAIIMQQQQFFQPQMQQQFFQPQMQQVTQGIFQPQMQQVTQGIFQPQLQQVTQGIFQPQMQGQIEGMRAFALQALPAMCDVYVPPHCPVATAPLGGF</sequence>
<reference key="1">
    <citation type="journal article" date="1989" name="Plant Cell">
        <title>Analysis of avenin proteins and the expression of their mRNAs in developing oat seeds.</title>
        <authorList>
            <person name="Chesnut R.S."/>
            <person name="Shotwell M.A."/>
            <person name="Boyer S.K."/>
            <person name="Larkins B.A."/>
        </authorList>
    </citation>
    <scope>NUCLEOTIDE SEQUENCE [MRNA]</scope>
    <source>
        <tissue>Seed</tissue>
    </source>
</reference>
<reference key="2">
    <citation type="journal article" date="1994" name="Eur. J. Biochem.">
        <title>The complete amino acid sequence and disulphide bond arrangement of oat alcohol-soluble avenin-3.</title>
        <authorList>
            <person name="Egorov T.A."/>
            <person name="Musolyamov A.K."/>
            <person name="Andersen J.S."/>
            <person name="Roepstorff P."/>
        </authorList>
    </citation>
    <scope>PROTEIN SEQUENCE OF 20-220</scope>
    <scope>PYROGLUTAMATE FORMATION AT GLN-20</scope>
    <source>
        <strain>cv. Narymsky 943</strain>
        <tissue>Endosperm</tissue>
    </source>
</reference>
<proteinExistence type="evidence at protein level"/>
<organism>
    <name type="scientific">Avena sativa</name>
    <name type="common">Oat</name>
    <dbReference type="NCBI Taxonomy" id="4498"/>
    <lineage>
        <taxon>Eukaryota</taxon>
        <taxon>Viridiplantae</taxon>
        <taxon>Streptophyta</taxon>
        <taxon>Embryophyta</taxon>
        <taxon>Tracheophyta</taxon>
        <taxon>Spermatophyta</taxon>
        <taxon>Magnoliopsida</taxon>
        <taxon>Liliopsida</taxon>
        <taxon>Poales</taxon>
        <taxon>Poaceae</taxon>
        <taxon>BOP clade</taxon>
        <taxon>Pooideae</taxon>
        <taxon>Poodae</taxon>
        <taxon>Poeae</taxon>
        <taxon>Poeae Chloroplast Group 1 (Aveneae type)</taxon>
        <taxon>Aveninae</taxon>
        <taxon>Avena</taxon>
    </lineage>
</organism>
<comment type="function">
    <text>Seed storage protein. Serves as a source of nitrogen, carbon, and sulfur for the young developing seedling.</text>
</comment>
<comment type="subunit">
    <text>Monomer.</text>
</comment>
<comment type="subcellular location">
    <subcellularLocation>
        <location>Vacuole</location>
    </subcellularLocation>
    <text>Protein bodies inside vacuoles.</text>
</comment>
<comment type="developmental stage">
    <text>First found between 4-6 days after anthesis (daa). Peaks at 8 daa when the seeds are in the milky endosperm stages.</text>
</comment>
<comment type="similarity">
    <text evidence="2">Belongs to the gliadin/glutenin family.</text>
</comment>
<feature type="signal peptide" evidence="1">
    <location>
        <begin position="1"/>
        <end position="19"/>
    </location>
</feature>
<feature type="chain" id="PRO_0000032284" description="Avenin-3">
    <location>
        <begin position="20"/>
        <end position="220"/>
    </location>
</feature>
<feature type="repeat" description="1-1">
    <location>
        <begin position="41"/>
        <end position="48"/>
    </location>
</feature>
<feature type="repeat" description="1-2">
    <location>
        <begin position="49"/>
        <end position="56"/>
    </location>
</feature>
<feature type="repeat" description="2-1">
    <location>
        <begin position="128"/>
        <end position="137"/>
    </location>
</feature>
<feature type="repeat" description="2-2; approximate">
    <location>
        <begin position="138"/>
        <end position="146"/>
    </location>
</feature>
<feature type="region of interest" description="2 X 8 AA tandem repeats of Q-Q-M-L-L-Q-Q-Q">
    <location>
        <begin position="41"/>
        <end position="56"/>
    </location>
</feature>
<feature type="region of interest" description="2 X 10 AA tandem repeats of M-Q-Q-Q-Q-F-F-Q-P-Q">
    <location>
        <begin position="128"/>
        <end position="146"/>
    </location>
</feature>
<feature type="modified residue" description="Pyrrolidone carboxylic acid" evidence="1">
    <location>
        <position position="20"/>
    </location>
</feature>
<feature type="disulfide bond">
    <location>
        <begin position="69"/>
        <end position="202"/>
    </location>
</feature>
<feature type="disulfide bond">
    <location>
        <begin position="77"/>
        <end position="96"/>
    </location>
</feature>
<feature type="disulfide bond">
    <location>
        <begin position="103"/>
        <end position="104"/>
    </location>
</feature>
<feature type="disulfide bond">
    <location>
        <begin position="116"/>
        <end position="210"/>
    </location>
</feature>
<keyword id="KW-0903">Direct protein sequencing</keyword>
<keyword id="KW-1015">Disulfide bond</keyword>
<keyword id="KW-0873">Pyrrolidone carboxylic acid</keyword>
<keyword id="KW-0677">Repeat</keyword>
<keyword id="KW-0708">Seed storage protein</keyword>
<keyword id="KW-0732">Signal</keyword>
<keyword id="KW-0758">Storage protein</keyword>
<keyword id="KW-0926">Vacuole</keyword>